<gene>
    <name evidence="1" type="primary">mshC</name>
    <name type="ordered locus">Xcel_1479</name>
</gene>
<sequence length="404" mass="43002">MRTWPTPDVPPLPRTGAPAPVLVHDSTTQSLVEAAPGATATLYACGITPYDATHLGHANTYLAFDLLQRAWLDAGKTVVYTSNVTDVDDPLLERATATGVDWRELAREQTELYRTDMTALRMLPPATWTGAVESIPAVVEAVTALLDAGAAYRVDADVYADLSADPGFGRVAGLDDATMRALFAERGGDPDRPGKKHPLDPALWRGEQPGEPSWDGGKLGPGRPGWHIECAVIARDGLGLPFDVQGGGADLLFPHHEMSTSHARLLAGGAARVHVHAGLLAYDGHKMSKSRGNLVFVSRLLAAGTDPMTVRLALLAHHYREEWEWTDVELRTAQRRLDTWTSAILSTHDDGEPADTVLDAVRAALAADLDAPAALAAVDRWAANPGGDAGVVVATVDALLGIEL</sequence>
<organism>
    <name type="scientific">Xylanimonas cellulosilytica (strain DSM 15894 / JCM 12276 / CECT 5975 / KCTC 9989 / LMG 20990 / NBRC 107835 / XIL07)</name>
    <dbReference type="NCBI Taxonomy" id="446471"/>
    <lineage>
        <taxon>Bacteria</taxon>
        <taxon>Bacillati</taxon>
        <taxon>Actinomycetota</taxon>
        <taxon>Actinomycetes</taxon>
        <taxon>Micrococcales</taxon>
        <taxon>Promicromonosporaceae</taxon>
        <taxon>Xylanimonas</taxon>
    </lineage>
</organism>
<protein>
    <recommendedName>
        <fullName evidence="1">L-cysteine:1D-myo-inositol 2-amino-2-deoxy-alpha-D-glucopyranoside ligase</fullName>
        <shortName evidence="1">L-Cys:GlcN-Ins ligase</shortName>
        <ecNumber evidence="1">6.3.1.13</ecNumber>
    </recommendedName>
    <alternativeName>
        <fullName evidence="1">Mycothiol ligase</fullName>
        <shortName evidence="1">MSH ligase</shortName>
    </alternativeName>
</protein>
<evidence type="ECO:0000255" key="1">
    <source>
        <dbReference type="HAMAP-Rule" id="MF_01697"/>
    </source>
</evidence>
<evidence type="ECO:0000256" key="2">
    <source>
        <dbReference type="SAM" id="MobiDB-lite"/>
    </source>
</evidence>
<comment type="function">
    <text evidence="1">Catalyzes the ATP-dependent condensation of GlcN-Ins and L-cysteine to form L-Cys-GlcN-Ins.</text>
</comment>
<comment type="catalytic activity">
    <reaction evidence="1">
        <text>1D-myo-inositol 2-amino-2-deoxy-alpha-D-glucopyranoside + L-cysteine + ATP = 1D-myo-inositol 2-(L-cysteinylamino)-2-deoxy-alpha-D-glucopyranoside + AMP + diphosphate + H(+)</text>
        <dbReference type="Rhea" id="RHEA:26176"/>
        <dbReference type="ChEBI" id="CHEBI:15378"/>
        <dbReference type="ChEBI" id="CHEBI:30616"/>
        <dbReference type="ChEBI" id="CHEBI:33019"/>
        <dbReference type="ChEBI" id="CHEBI:35235"/>
        <dbReference type="ChEBI" id="CHEBI:58886"/>
        <dbReference type="ChEBI" id="CHEBI:58887"/>
        <dbReference type="ChEBI" id="CHEBI:456215"/>
        <dbReference type="EC" id="6.3.1.13"/>
    </reaction>
</comment>
<comment type="cofactor">
    <cofactor evidence="1">
        <name>Zn(2+)</name>
        <dbReference type="ChEBI" id="CHEBI:29105"/>
    </cofactor>
    <text evidence="1">Binds 1 zinc ion per subunit.</text>
</comment>
<comment type="subunit">
    <text evidence="1">Monomer.</text>
</comment>
<comment type="similarity">
    <text evidence="1">Belongs to the class-I aminoacyl-tRNA synthetase family. MshC subfamily.</text>
</comment>
<reference key="1">
    <citation type="submission" date="2009-11" db="EMBL/GenBank/DDBJ databases">
        <title>The complete chromosome of Xylanimonas cellulosilytica DSM 15894.</title>
        <authorList>
            <consortium name="US DOE Joint Genome Institute (JGI-PGF)"/>
            <person name="Lucas S."/>
            <person name="Copeland A."/>
            <person name="Lapidus A."/>
            <person name="Glavina del Rio T."/>
            <person name="Dalin E."/>
            <person name="Tice H."/>
            <person name="Bruce D."/>
            <person name="Goodwin L."/>
            <person name="Pitluck S."/>
            <person name="Kyrpides N."/>
            <person name="Mavromatis K."/>
            <person name="Ivanova N."/>
            <person name="Mikhailova N."/>
            <person name="Foster B."/>
            <person name="Clum A."/>
            <person name="Brettin T."/>
            <person name="Detter J.C."/>
            <person name="Han C."/>
            <person name="Larimer F."/>
            <person name="Land M."/>
            <person name="Hauser L."/>
            <person name="Markowitz V."/>
            <person name="Cheng J.F."/>
            <person name="Hugenholtz P."/>
            <person name="Woyke T."/>
            <person name="Wu D."/>
            <person name="Gehrich-Schroeter G."/>
            <person name="Schneider S."/>
            <person name="Pukall S.R."/>
            <person name="Klenk H.P."/>
            <person name="Eisen J.A."/>
        </authorList>
    </citation>
    <scope>NUCLEOTIDE SEQUENCE [LARGE SCALE GENOMIC DNA]</scope>
    <source>
        <strain>DSM 15894 / JCM 12276 / CECT 5975 / KCTC 9989 / LMG 20990 / NBRC 107835 / XIL07</strain>
    </source>
</reference>
<name>MSHC_XYLCX</name>
<proteinExistence type="inferred from homology"/>
<accession>D1BS17</accession>
<keyword id="KW-0067">ATP-binding</keyword>
<keyword id="KW-0436">Ligase</keyword>
<keyword id="KW-0479">Metal-binding</keyword>
<keyword id="KW-0547">Nucleotide-binding</keyword>
<keyword id="KW-1185">Reference proteome</keyword>
<keyword id="KW-0862">Zinc</keyword>
<feature type="chain" id="PRO_0000400494" description="L-cysteine:1D-myo-inositol 2-amino-2-deoxy-alpha-D-glucopyranoside ligase">
    <location>
        <begin position="1"/>
        <end position="404"/>
    </location>
</feature>
<feature type="region of interest" description="Disordered" evidence="2">
    <location>
        <begin position="1"/>
        <end position="20"/>
    </location>
</feature>
<feature type="region of interest" description="Disordered" evidence="2">
    <location>
        <begin position="185"/>
        <end position="216"/>
    </location>
</feature>
<feature type="short sequence motif" description="'HIGH' region" evidence="1">
    <location>
        <begin position="47"/>
        <end position="57"/>
    </location>
</feature>
<feature type="short sequence motif" description="'ERGGDP' region" evidence="1">
    <location>
        <begin position="185"/>
        <end position="190"/>
    </location>
</feature>
<feature type="short sequence motif" description="'KMSKS' region" evidence="1">
    <location>
        <begin position="286"/>
        <end position="290"/>
    </location>
</feature>
<feature type="compositionally biased region" description="Basic and acidic residues" evidence="2">
    <location>
        <begin position="186"/>
        <end position="199"/>
    </location>
</feature>
<feature type="binding site" evidence="1">
    <location>
        <begin position="45"/>
        <end position="48"/>
    </location>
    <ligand>
        <name>L-cysteinyl-5'-AMP</name>
        <dbReference type="ChEBI" id="CHEBI:144924"/>
    </ligand>
</feature>
<feature type="binding site" evidence="1">
    <location>
        <position position="45"/>
    </location>
    <ligand>
        <name>Zn(2+)</name>
        <dbReference type="ChEBI" id="CHEBI:29105"/>
    </ligand>
</feature>
<feature type="binding site" evidence="1">
    <location>
        <position position="60"/>
    </location>
    <ligand>
        <name>L-cysteinyl-5'-AMP</name>
        <dbReference type="ChEBI" id="CHEBI:144924"/>
    </ligand>
</feature>
<feature type="binding site" evidence="1">
    <location>
        <begin position="83"/>
        <end position="85"/>
    </location>
    <ligand>
        <name>L-cysteinyl-5'-AMP</name>
        <dbReference type="ChEBI" id="CHEBI:144924"/>
    </ligand>
</feature>
<feature type="binding site" evidence="1">
    <location>
        <position position="226"/>
    </location>
    <ligand>
        <name>L-cysteinyl-5'-AMP</name>
        <dbReference type="ChEBI" id="CHEBI:144924"/>
    </ligand>
</feature>
<feature type="binding site" evidence="1">
    <location>
        <position position="230"/>
    </location>
    <ligand>
        <name>Zn(2+)</name>
        <dbReference type="ChEBI" id="CHEBI:29105"/>
    </ligand>
</feature>
<feature type="binding site" evidence="1">
    <location>
        <begin position="248"/>
        <end position="250"/>
    </location>
    <ligand>
        <name>L-cysteinyl-5'-AMP</name>
        <dbReference type="ChEBI" id="CHEBI:144924"/>
    </ligand>
</feature>
<feature type="binding site" evidence="1">
    <location>
        <position position="255"/>
    </location>
    <ligand>
        <name>Zn(2+)</name>
        <dbReference type="ChEBI" id="CHEBI:29105"/>
    </ligand>
</feature>
<feature type="binding site" evidence="1">
    <location>
        <position position="280"/>
    </location>
    <ligand>
        <name>L-cysteinyl-5'-AMP</name>
        <dbReference type="ChEBI" id="CHEBI:144924"/>
    </ligand>
</feature>
<dbReference type="EC" id="6.3.1.13" evidence="1"/>
<dbReference type="EMBL" id="CP001821">
    <property type="protein sequence ID" value="ACZ30509.1"/>
    <property type="molecule type" value="Genomic_DNA"/>
</dbReference>
<dbReference type="RefSeq" id="WP_012878251.1">
    <property type="nucleotide sequence ID" value="NC_013530.1"/>
</dbReference>
<dbReference type="SMR" id="D1BS17"/>
<dbReference type="STRING" id="446471.Xcel_1479"/>
<dbReference type="KEGG" id="xce:Xcel_1479"/>
<dbReference type="eggNOG" id="COG0215">
    <property type="taxonomic scope" value="Bacteria"/>
</dbReference>
<dbReference type="HOGENOM" id="CLU_013528_0_0_11"/>
<dbReference type="OrthoDB" id="9815130at2"/>
<dbReference type="Proteomes" id="UP000002255">
    <property type="component" value="Chromosome"/>
</dbReference>
<dbReference type="GO" id="GO:0005829">
    <property type="term" value="C:cytosol"/>
    <property type="evidence" value="ECO:0007669"/>
    <property type="project" value="TreeGrafter"/>
</dbReference>
<dbReference type="GO" id="GO:0005524">
    <property type="term" value="F:ATP binding"/>
    <property type="evidence" value="ECO:0007669"/>
    <property type="project" value="UniProtKB-KW"/>
</dbReference>
<dbReference type="GO" id="GO:0035446">
    <property type="term" value="F:cysteine-glucosaminylinositol ligase activity"/>
    <property type="evidence" value="ECO:0007669"/>
    <property type="project" value="UniProtKB-UniRule"/>
</dbReference>
<dbReference type="GO" id="GO:0004817">
    <property type="term" value="F:cysteine-tRNA ligase activity"/>
    <property type="evidence" value="ECO:0007669"/>
    <property type="project" value="TreeGrafter"/>
</dbReference>
<dbReference type="GO" id="GO:0008270">
    <property type="term" value="F:zinc ion binding"/>
    <property type="evidence" value="ECO:0007669"/>
    <property type="project" value="UniProtKB-UniRule"/>
</dbReference>
<dbReference type="GO" id="GO:0006423">
    <property type="term" value="P:cysteinyl-tRNA aminoacylation"/>
    <property type="evidence" value="ECO:0007669"/>
    <property type="project" value="TreeGrafter"/>
</dbReference>
<dbReference type="GO" id="GO:0010125">
    <property type="term" value="P:mycothiol biosynthetic process"/>
    <property type="evidence" value="ECO:0007669"/>
    <property type="project" value="UniProtKB-UniRule"/>
</dbReference>
<dbReference type="Gene3D" id="1.20.120.640">
    <property type="entry name" value="Anticodon-binding domain of a subclass of class I aminoacyl-tRNA synthetases"/>
    <property type="match status" value="1"/>
</dbReference>
<dbReference type="Gene3D" id="3.40.50.620">
    <property type="entry name" value="HUPs"/>
    <property type="match status" value="1"/>
</dbReference>
<dbReference type="HAMAP" id="MF_01697">
    <property type="entry name" value="MshC"/>
    <property type="match status" value="1"/>
</dbReference>
<dbReference type="InterPro" id="IPR024909">
    <property type="entry name" value="Cys-tRNA/MSH_ligase"/>
</dbReference>
<dbReference type="InterPro" id="IPR017812">
    <property type="entry name" value="Mycothiol_ligase_MshC"/>
</dbReference>
<dbReference type="InterPro" id="IPR014729">
    <property type="entry name" value="Rossmann-like_a/b/a_fold"/>
</dbReference>
<dbReference type="InterPro" id="IPR032678">
    <property type="entry name" value="tRNA-synt_1_cat_dom"/>
</dbReference>
<dbReference type="NCBIfam" id="TIGR03447">
    <property type="entry name" value="mycothiol_MshC"/>
    <property type="match status" value="1"/>
</dbReference>
<dbReference type="PANTHER" id="PTHR10890:SF3">
    <property type="entry name" value="CYSTEINE--TRNA LIGASE, CYTOPLASMIC"/>
    <property type="match status" value="1"/>
</dbReference>
<dbReference type="PANTHER" id="PTHR10890">
    <property type="entry name" value="CYSTEINYL-TRNA SYNTHETASE"/>
    <property type="match status" value="1"/>
</dbReference>
<dbReference type="Pfam" id="PF01406">
    <property type="entry name" value="tRNA-synt_1e"/>
    <property type="match status" value="1"/>
</dbReference>
<dbReference type="PRINTS" id="PR00983">
    <property type="entry name" value="TRNASYNTHCYS"/>
</dbReference>
<dbReference type="SUPFAM" id="SSF52374">
    <property type="entry name" value="Nucleotidylyl transferase"/>
    <property type="match status" value="1"/>
</dbReference>